<reference key="1">
    <citation type="journal article" date="2007" name="PLoS Genet.">
        <title>Patterns and implications of gene gain and loss in the evolution of Prochlorococcus.</title>
        <authorList>
            <person name="Kettler G.C."/>
            <person name="Martiny A.C."/>
            <person name="Huang K."/>
            <person name="Zucker J."/>
            <person name="Coleman M.L."/>
            <person name="Rodrigue S."/>
            <person name="Chen F."/>
            <person name="Lapidus A."/>
            <person name="Ferriera S."/>
            <person name="Johnson J."/>
            <person name="Steglich C."/>
            <person name="Church G.M."/>
            <person name="Richardson P."/>
            <person name="Chisholm S.W."/>
        </authorList>
    </citation>
    <scope>NUCLEOTIDE SEQUENCE [LARGE SCALE GENOMIC DNA]</scope>
    <source>
        <strain>MIT 9515</strain>
    </source>
</reference>
<organism>
    <name type="scientific">Prochlorococcus marinus (strain MIT 9515)</name>
    <dbReference type="NCBI Taxonomy" id="167542"/>
    <lineage>
        <taxon>Bacteria</taxon>
        <taxon>Bacillati</taxon>
        <taxon>Cyanobacteriota</taxon>
        <taxon>Cyanophyceae</taxon>
        <taxon>Synechococcales</taxon>
        <taxon>Prochlorococcaceae</taxon>
        <taxon>Prochlorococcus</taxon>
    </lineage>
</organism>
<feature type="chain" id="PRO_1000012008" description="Polyamine aminopropyltransferase">
    <location>
        <begin position="1"/>
        <end position="283"/>
    </location>
</feature>
<feature type="domain" description="PABS" evidence="1">
    <location>
        <begin position="5"/>
        <end position="238"/>
    </location>
</feature>
<feature type="active site" description="Proton acceptor" evidence="1">
    <location>
        <position position="158"/>
    </location>
</feature>
<feature type="binding site" evidence="1">
    <location>
        <position position="32"/>
    </location>
    <ligand>
        <name>S-methyl-5'-thioadenosine</name>
        <dbReference type="ChEBI" id="CHEBI:17509"/>
    </ligand>
</feature>
<feature type="binding site" evidence="1">
    <location>
        <position position="63"/>
    </location>
    <ligand>
        <name>spermidine</name>
        <dbReference type="ChEBI" id="CHEBI:57834"/>
    </ligand>
</feature>
<feature type="binding site" evidence="1">
    <location>
        <position position="87"/>
    </location>
    <ligand>
        <name>spermidine</name>
        <dbReference type="ChEBI" id="CHEBI:57834"/>
    </ligand>
</feature>
<feature type="binding site" evidence="1">
    <location>
        <position position="107"/>
    </location>
    <ligand>
        <name>S-methyl-5'-thioadenosine</name>
        <dbReference type="ChEBI" id="CHEBI:17509"/>
    </ligand>
</feature>
<feature type="binding site" evidence="1">
    <location>
        <begin position="139"/>
        <end position="140"/>
    </location>
    <ligand>
        <name>S-methyl-5'-thioadenosine</name>
        <dbReference type="ChEBI" id="CHEBI:17509"/>
    </ligand>
</feature>
<feature type="binding site" evidence="1">
    <location>
        <begin position="158"/>
        <end position="161"/>
    </location>
    <ligand>
        <name>spermidine</name>
        <dbReference type="ChEBI" id="CHEBI:57834"/>
    </ligand>
</feature>
<gene>
    <name evidence="1" type="primary">speE</name>
    <name type="ordered locus">P9515_18761</name>
</gene>
<keyword id="KW-0963">Cytoplasm</keyword>
<keyword id="KW-0620">Polyamine biosynthesis</keyword>
<keyword id="KW-0745">Spermidine biosynthesis</keyword>
<keyword id="KW-0808">Transferase</keyword>
<proteinExistence type="inferred from homology"/>
<dbReference type="EC" id="2.5.1.16" evidence="1"/>
<dbReference type="EMBL" id="CP000552">
    <property type="protein sequence ID" value="ABM73083.1"/>
    <property type="molecule type" value="Genomic_DNA"/>
</dbReference>
<dbReference type="RefSeq" id="WP_011821167.1">
    <property type="nucleotide sequence ID" value="NC_008817.1"/>
</dbReference>
<dbReference type="SMR" id="A2BZ72"/>
<dbReference type="STRING" id="167542.P9515_18761"/>
<dbReference type="GeneID" id="60201067"/>
<dbReference type="KEGG" id="pmc:P9515_18761"/>
<dbReference type="eggNOG" id="COG0421">
    <property type="taxonomic scope" value="Bacteria"/>
</dbReference>
<dbReference type="HOGENOM" id="CLU_048199_0_0_3"/>
<dbReference type="OrthoDB" id="9793120at2"/>
<dbReference type="UniPathway" id="UPA00248">
    <property type="reaction ID" value="UER00314"/>
</dbReference>
<dbReference type="Proteomes" id="UP000001589">
    <property type="component" value="Chromosome"/>
</dbReference>
<dbReference type="GO" id="GO:0005737">
    <property type="term" value="C:cytoplasm"/>
    <property type="evidence" value="ECO:0007669"/>
    <property type="project" value="UniProtKB-SubCell"/>
</dbReference>
<dbReference type="GO" id="GO:0004766">
    <property type="term" value="F:spermidine synthase activity"/>
    <property type="evidence" value="ECO:0007669"/>
    <property type="project" value="UniProtKB-UniRule"/>
</dbReference>
<dbReference type="GO" id="GO:0008295">
    <property type="term" value="P:spermidine biosynthetic process"/>
    <property type="evidence" value="ECO:0007669"/>
    <property type="project" value="UniProtKB-UniRule"/>
</dbReference>
<dbReference type="Gene3D" id="2.30.140.10">
    <property type="entry name" value="Spermidine synthase, tetramerisation domain"/>
    <property type="match status" value="1"/>
</dbReference>
<dbReference type="Gene3D" id="3.40.50.150">
    <property type="entry name" value="Vaccinia Virus protein VP39"/>
    <property type="match status" value="1"/>
</dbReference>
<dbReference type="HAMAP" id="MF_00198">
    <property type="entry name" value="Spermidine_synth"/>
    <property type="match status" value="1"/>
</dbReference>
<dbReference type="InterPro" id="IPR030374">
    <property type="entry name" value="PABS"/>
</dbReference>
<dbReference type="InterPro" id="IPR030373">
    <property type="entry name" value="PABS_CS"/>
</dbReference>
<dbReference type="InterPro" id="IPR029063">
    <property type="entry name" value="SAM-dependent_MTases_sf"/>
</dbReference>
<dbReference type="InterPro" id="IPR001045">
    <property type="entry name" value="Spermi_synthase"/>
</dbReference>
<dbReference type="InterPro" id="IPR035246">
    <property type="entry name" value="Spermidine_synt_N"/>
</dbReference>
<dbReference type="InterPro" id="IPR037163">
    <property type="entry name" value="Spermidine_synt_N_sf"/>
</dbReference>
<dbReference type="NCBIfam" id="NF002010">
    <property type="entry name" value="PRK00811.1"/>
    <property type="match status" value="1"/>
</dbReference>
<dbReference type="PANTHER" id="PTHR11558:SF11">
    <property type="entry name" value="SPERMIDINE SYNTHASE"/>
    <property type="match status" value="1"/>
</dbReference>
<dbReference type="PANTHER" id="PTHR11558">
    <property type="entry name" value="SPERMIDINE/SPERMINE SYNTHASE"/>
    <property type="match status" value="1"/>
</dbReference>
<dbReference type="Pfam" id="PF17284">
    <property type="entry name" value="Spermine_synt_N"/>
    <property type="match status" value="1"/>
</dbReference>
<dbReference type="Pfam" id="PF01564">
    <property type="entry name" value="Spermine_synth"/>
    <property type="match status" value="1"/>
</dbReference>
<dbReference type="SUPFAM" id="SSF53335">
    <property type="entry name" value="S-adenosyl-L-methionine-dependent methyltransferases"/>
    <property type="match status" value="1"/>
</dbReference>
<dbReference type="PROSITE" id="PS01330">
    <property type="entry name" value="PABS_1"/>
    <property type="match status" value="1"/>
</dbReference>
<dbReference type="PROSITE" id="PS51006">
    <property type="entry name" value="PABS_2"/>
    <property type="match status" value="1"/>
</dbReference>
<protein>
    <recommendedName>
        <fullName evidence="1">Polyamine aminopropyltransferase</fullName>
    </recommendedName>
    <alternativeName>
        <fullName evidence="1">Putrescine aminopropyltransferase</fullName>
        <shortName evidence="1">PAPT</shortName>
    </alternativeName>
    <alternativeName>
        <fullName evidence="1">Spermidine synthase</fullName>
        <shortName evidence="1">SPDS</shortName>
        <shortName evidence="1">SPDSY</shortName>
        <ecNumber evidence="1">2.5.1.16</ecNumber>
    </alternativeName>
</protein>
<name>SPEE_PROM5</name>
<accession>A2BZ72</accession>
<comment type="function">
    <text evidence="1">Catalyzes the irreversible transfer of a propylamine group from the amino donor S-adenosylmethioninamine (decarboxy-AdoMet) to putrescine (1,4-diaminobutane) to yield spermidine.</text>
</comment>
<comment type="catalytic activity">
    <reaction evidence="1">
        <text>S-adenosyl 3-(methylsulfanyl)propylamine + putrescine = S-methyl-5'-thioadenosine + spermidine + H(+)</text>
        <dbReference type="Rhea" id="RHEA:12721"/>
        <dbReference type="ChEBI" id="CHEBI:15378"/>
        <dbReference type="ChEBI" id="CHEBI:17509"/>
        <dbReference type="ChEBI" id="CHEBI:57443"/>
        <dbReference type="ChEBI" id="CHEBI:57834"/>
        <dbReference type="ChEBI" id="CHEBI:326268"/>
        <dbReference type="EC" id="2.5.1.16"/>
    </reaction>
</comment>
<comment type="pathway">
    <text evidence="1">Amine and polyamine biosynthesis; spermidine biosynthesis; spermidine from putrescine: step 1/1.</text>
</comment>
<comment type="subunit">
    <text evidence="1">Homodimer or homotetramer.</text>
</comment>
<comment type="subcellular location">
    <subcellularLocation>
        <location evidence="1">Cytoplasm</location>
    </subcellularLocation>
</comment>
<comment type="similarity">
    <text evidence="1">Belongs to the spermidine/spermine synthase family.</text>
</comment>
<sequence>MKDITTWIDEYQKGSRFGLKGKVLLKKNSKFQEILIIESDYYGKALMLDRCWMTSMRDEKYYHECLVHPALSSIKEKSRILIIGGGDGGTARECLKYSQVEKIDLVEIDEEVIKASKKFLQEIGGTAWIDKRLTIHIDDGVKWVEKAKNNFYDCIFIDCSDPSEFSNLLFTDTFYKECKRILTQKGILATQSESPESFKNIHIHILKSLKKVFKLSETMYSFVPIYPSGIWSWTFASKGELNLSTPCCNEVTTIEKGCDIWNLNFQNAAFKMMPNKIVKELNS</sequence>
<evidence type="ECO:0000255" key="1">
    <source>
        <dbReference type="HAMAP-Rule" id="MF_00198"/>
    </source>
</evidence>